<proteinExistence type="uncertain"/>
<name>YO001_HUMAN</name>
<evidence type="ECO:0000305" key="1"/>
<reference key="1">
    <citation type="journal article" date="2003" name="Genome Res.">
        <title>The secreted protein discovery initiative (SPDI), a large-scale effort to identify novel human secreted and transmembrane proteins: a bioinformatics assessment.</title>
        <authorList>
            <person name="Clark H.F."/>
            <person name="Gurney A.L."/>
            <person name="Abaya E."/>
            <person name="Baker K."/>
            <person name="Baldwin D.T."/>
            <person name="Brush J."/>
            <person name="Chen J."/>
            <person name="Chow B."/>
            <person name="Chui C."/>
            <person name="Crowley C."/>
            <person name="Currell B."/>
            <person name="Deuel B."/>
            <person name="Dowd P."/>
            <person name="Eaton D."/>
            <person name="Foster J.S."/>
            <person name="Grimaldi C."/>
            <person name="Gu Q."/>
            <person name="Hass P.E."/>
            <person name="Heldens S."/>
            <person name="Huang A."/>
            <person name="Kim H.S."/>
            <person name="Klimowski L."/>
            <person name="Jin Y."/>
            <person name="Johnson S."/>
            <person name="Lee J."/>
            <person name="Lewis L."/>
            <person name="Liao D."/>
            <person name="Mark M.R."/>
            <person name="Robbie E."/>
            <person name="Sanchez C."/>
            <person name="Schoenfeld J."/>
            <person name="Seshagiri S."/>
            <person name="Simmons L."/>
            <person name="Singh J."/>
            <person name="Smith V."/>
            <person name="Stinson J."/>
            <person name="Vagts A."/>
            <person name="Vandlen R.L."/>
            <person name="Watanabe C."/>
            <person name="Wieand D."/>
            <person name="Woods K."/>
            <person name="Xie M.-H."/>
            <person name="Yansura D.G."/>
            <person name="Yi S."/>
            <person name="Yu G."/>
            <person name="Yuan J."/>
            <person name="Zhang M."/>
            <person name="Zhang Z."/>
            <person name="Goddard A.D."/>
            <person name="Wood W.I."/>
            <person name="Godowski P.J."/>
            <person name="Gray A.M."/>
        </authorList>
    </citation>
    <scope>NUCLEOTIDE SEQUENCE [LARGE SCALE MRNA]</scope>
</reference>
<feature type="chain" id="PRO_0000317733" description="Putative uncharacterized protein UNQ9370/PRO34162">
    <location>
        <begin position="1"/>
        <end position="181"/>
    </location>
</feature>
<comment type="caution">
    <text evidence="1">Product of a dubious CDS prediction.</text>
</comment>
<gene>
    <name type="ORF">UNQ9370/PRO34162</name>
</gene>
<keyword id="KW-1185">Reference proteome</keyword>
<organism>
    <name type="scientific">Homo sapiens</name>
    <name type="common">Human</name>
    <dbReference type="NCBI Taxonomy" id="9606"/>
    <lineage>
        <taxon>Eukaryota</taxon>
        <taxon>Metazoa</taxon>
        <taxon>Chordata</taxon>
        <taxon>Craniata</taxon>
        <taxon>Vertebrata</taxon>
        <taxon>Euteleostomi</taxon>
        <taxon>Mammalia</taxon>
        <taxon>Eutheria</taxon>
        <taxon>Euarchontoglires</taxon>
        <taxon>Primates</taxon>
        <taxon>Haplorrhini</taxon>
        <taxon>Catarrhini</taxon>
        <taxon>Hominidae</taxon>
        <taxon>Homo</taxon>
    </lineage>
</organism>
<sequence length="181" mass="19777">MIFMQILEPQEVPSFLMICQRRSPAMHRTCTDHAPLAIAQVWLWVSLAKAGSNRRGPGRAEGTFFSLLAALHAAQHFPNLPTAPGGASQSNIVSPELTPKPTTALKHAECLLDLNSHSLYRKPRPKAAVYLNLSLPLKSVHRLSLKKSFGFGKRDFENNSVFIVDSGGTCAGLLPGYIGWC</sequence>
<accession>Q6UXP9</accession>
<dbReference type="EMBL" id="AY358254">
    <property type="protein sequence ID" value="AAQ88621.1"/>
    <property type="molecule type" value="mRNA"/>
</dbReference>
<dbReference type="RefSeq" id="XP_011506824.1">
    <property type="nucleotide sequence ID" value="XM_011508522.2"/>
</dbReference>
<dbReference type="RefSeq" id="XP_011520610.1">
    <property type="nucleotide sequence ID" value="XM_011522308.2"/>
</dbReference>
<dbReference type="BioMuta" id="UNQ9370/PRO34162"/>
<dbReference type="ProteomicsDB" id="67645"/>
<dbReference type="neXtProt" id="NX_Q6UXP9"/>
<dbReference type="InParanoid" id="Q6UXP9"/>
<dbReference type="PAN-GO" id="Q6UXP9">
    <property type="GO annotations" value="0 GO annotations based on evolutionary models"/>
</dbReference>
<dbReference type="BioGRID-ORCS" id="105370980">
    <property type="hits" value="0 hits in 1 CRISPR screen"/>
</dbReference>
<dbReference type="Pharos" id="Q6UXP9">
    <property type="development level" value="Tdark"/>
</dbReference>
<dbReference type="Proteomes" id="UP000005640">
    <property type="component" value="Unplaced"/>
</dbReference>
<dbReference type="RNAct" id="Q6UXP9">
    <property type="molecule type" value="protein"/>
</dbReference>
<protein>
    <recommendedName>
        <fullName>Putative uncharacterized protein UNQ9370/PRO34162</fullName>
    </recommendedName>
</protein>